<keyword id="KW-0067">ATP-binding</keyword>
<keyword id="KW-0131">Cell cycle</keyword>
<keyword id="KW-0132">Cell division</keyword>
<keyword id="KW-0133">Cell shape</keyword>
<keyword id="KW-0961">Cell wall biogenesis/degradation</keyword>
<keyword id="KW-0963">Cytoplasm</keyword>
<keyword id="KW-0436">Ligase</keyword>
<keyword id="KW-0547">Nucleotide-binding</keyword>
<keyword id="KW-0573">Peptidoglycan synthesis</keyword>
<keyword id="KW-1185">Reference proteome</keyword>
<reference key="1">
    <citation type="submission" date="2006-12" db="EMBL/GenBank/DDBJ databases">
        <title>Complete sequence of chromosome 1 of Nocardioides sp. JS614.</title>
        <authorList>
            <person name="Copeland A."/>
            <person name="Lucas S."/>
            <person name="Lapidus A."/>
            <person name="Barry K."/>
            <person name="Detter J.C."/>
            <person name="Glavina del Rio T."/>
            <person name="Hammon N."/>
            <person name="Israni S."/>
            <person name="Dalin E."/>
            <person name="Tice H."/>
            <person name="Pitluck S."/>
            <person name="Thompson L.S."/>
            <person name="Brettin T."/>
            <person name="Bruce D."/>
            <person name="Han C."/>
            <person name="Tapia R."/>
            <person name="Schmutz J."/>
            <person name="Larimer F."/>
            <person name="Land M."/>
            <person name="Hauser L."/>
            <person name="Kyrpides N."/>
            <person name="Kim E."/>
            <person name="Mattes T."/>
            <person name="Gossett J."/>
            <person name="Richardson P."/>
        </authorList>
    </citation>
    <scope>NUCLEOTIDE SEQUENCE [LARGE SCALE GENOMIC DNA]</scope>
    <source>
        <strain>ATCC BAA-499 / JS614</strain>
    </source>
</reference>
<evidence type="ECO:0000255" key="1">
    <source>
        <dbReference type="HAMAP-Rule" id="MF_00046"/>
    </source>
</evidence>
<protein>
    <recommendedName>
        <fullName evidence="1">UDP-N-acetylmuramate--L-alanine ligase</fullName>
        <ecNumber evidence="1">6.3.2.8</ecNumber>
    </recommendedName>
    <alternativeName>
        <fullName evidence="1">UDP-N-acetylmuramoyl-L-alanine synthetase</fullName>
    </alternativeName>
</protein>
<comment type="function">
    <text evidence="1">Cell wall formation.</text>
</comment>
<comment type="catalytic activity">
    <reaction evidence="1">
        <text>UDP-N-acetyl-alpha-D-muramate + L-alanine + ATP = UDP-N-acetyl-alpha-D-muramoyl-L-alanine + ADP + phosphate + H(+)</text>
        <dbReference type="Rhea" id="RHEA:23372"/>
        <dbReference type="ChEBI" id="CHEBI:15378"/>
        <dbReference type="ChEBI" id="CHEBI:30616"/>
        <dbReference type="ChEBI" id="CHEBI:43474"/>
        <dbReference type="ChEBI" id="CHEBI:57972"/>
        <dbReference type="ChEBI" id="CHEBI:70757"/>
        <dbReference type="ChEBI" id="CHEBI:83898"/>
        <dbReference type="ChEBI" id="CHEBI:456216"/>
        <dbReference type="EC" id="6.3.2.8"/>
    </reaction>
</comment>
<comment type="pathway">
    <text evidence="1">Cell wall biogenesis; peptidoglycan biosynthesis.</text>
</comment>
<comment type="subcellular location">
    <subcellularLocation>
        <location evidence="1">Cytoplasm</location>
    </subcellularLocation>
</comment>
<comment type="similarity">
    <text evidence="1">Belongs to the MurCDEF family.</text>
</comment>
<gene>
    <name evidence="1" type="primary">murC</name>
    <name type="ordered locus">Noca_3062</name>
</gene>
<name>MURC_NOCSJ</name>
<dbReference type="EC" id="6.3.2.8" evidence="1"/>
<dbReference type="EMBL" id="CP000509">
    <property type="protein sequence ID" value="ABL82564.1"/>
    <property type="molecule type" value="Genomic_DNA"/>
</dbReference>
<dbReference type="RefSeq" id="WP_011756498.1">
    <property type="nucleotide sequence ID" value="NC_008699.1"/>
</dbReference>
<dbReference type="SMR" id="A1SL79"/>
<dbReference type="STRING" id="196162.Noca_3062"/>
<dbReference type="KEGG" id="nca:Noca_3062"/>
<dbReference type="eggNOG" id="COG0773">
    <property type="taxonomic scope" value="Bacteria"/>
</dbReference>
<dbReference type="HOGENOM" id="CLU_028104_2_1_11"/>
<dbReference type="OrthoDB" id="9804126at2"/>
<dbReference type="UniPathway" id="UPA00219"/>
<dbReference type="Proteomes" id="UP000000640">
    <property type="component" value="Chromosome"/>
</dbReference>
<dbReference type="GO" id="GO:0005737">
    <property type="term" value="C:cytoplasm"/>
    <property type="evidence" value="ECO:0007669"/>
    <property type="project" value="UniProtKB-SubCell"/>
</dbReference>
<dbReference type="GO" id="GO:0005524">
    <property type="term" value="F:ATP binding"/>
    <property type="evidence" value="ECO:0007669"/>
    <property type="project" value="UniProtKB-UniRule"/>
</dbReference>
<dbReference type="GO" id="GO:0008763">
    <property type="term" value="F:UDP-N-acetylmuramate-L-alanine ligase activity"/>
    <property type="evidence" value="ECO:0007669"/>
    <property type="project" value="UniProtKB-UniRule"/>
</dbReference>
<dbReference type="GO" id="GO:0051301">
    <property type="term" value="P:cell division"/>
    <property type="evidence" value="ECO:0007669"/>
    <property type="project" value="UniProtKB-KW"/>
</dbReference>
<dbReference type="GO" id="GO:0071555">
    <property type="term" value="P:cell wall organization"/>
    <property type="evidence" value="ECO:0007669"/>
    <property type="project" value="UniProtKB-KW"/>
</dbReference>
<dbReference type="GO" id="GO:0009252">
    <property type="term" value="P:peptidoglycan biosynthetic process"/>
    <property type="evidence" value="ECO:0007669"/>
    <property type="project" value="UniProtKB-UniRule"/>
</dbReference>
<dbReference type="GO" id="GO:0008360">
    <property type="term" value="P:regulation of cell shape"/>
    <property type="evidence" value="ECO:0007669"/>
    <property type="project" value="UniProtKB-KW"/>
</dbReference>
<dbReference type="Gene3D" id="3.90.190.20">
    <property type="entry name" value="Mur ligase, C-terminal domain"/>
    <property type="match status" value="1"/>
</dbReference>
<dbReference type="Gene3D" id="3.40.1190.10">
    <property type="entry name" value="Mur-like, catalytic domain"/>
    <property type="match status" value="1"/>
</dbReference>
<dbReference type="Gene3D" id="3.40.50.720">
    <property type="entry name" value="NAD(P)-binding Rossmann-like Domain"/>
    <property type="match status" value="1"/>
</dbReference>
<dbReference type="HAMAP" id="MF_00046">
    <property type="entry name" value="MurC"/>
    <property type="match status" value="1"/>
</dbReference>
<dbReference type="InterPro" id="IPR036565">
    <property type="entry name" value="Mur-like_cat_sf"/>
</dbReference>
<dbReference type="InterPro" id="IPR004101">
    <property type="entry name" value="Mur_ligase_C"/>
</dbReference>
<dbReference type="InterPro" id="IPR036615">
    <property type="entry name" value="Mur_ligase_C_dom_sf"/>
</dbReference>
<dbReference type="InterPro" id="IPR013221">
    <property type="entry name" value="Mur_ligase_cen"/>
</dbReference>
<dbReference type="InterPro" id="IPR000713">
    <property type="entry name" value="Mur_ligase_N"/>
</dbReference>
<dbReference type="InterPro" id="IPR050061">
    <property type="entry name" value="MurCDEF_pg_biosynth"/>
</dbReference>
<dbReference type="InterPro" id="IPR005758">
    <property type="entry name" value="UDP-N-AcMur_Ala_ligase_MurC"/>
</dbReference>
<dbReference type="PANTHER" id="PTHR43445:SF3">
    <property type="entry name" value="UDP-N-ACETYLMURAMATE--L-ALANINE LIGASE"/>
    <property type="match status" value="1"/>
</dbReference>
<dbReference type="PANTHER" id="PTHR43445">
    <property type="entry name" value="UDP-N-ACETYLMURAMATE--L-ALANINE LIGASE-RELATED"/>
    <property type="match status" value="1"/>
</dbReference>
<dbReference type="Pfam" id="PF01225">
    <property type="entry name" value="Mur_ligase"/>
    <property type="match status" value="1"/>
</dbReference>
<dbReference type="Pfam" id="PF02875">
    <property type="entry name" value="Mur_ligase_C"/>
    <property type="match status" value="1"/>
</dbReference>
<dbReference type="Pfam" id="PF08245">
    <property type="entry name" value="Mur_ligase_M"/>
    <property type="match status" value="1"/>
</dbReference>
<dbReference type="SUPFAM" id="SSF51984">
    <property type="entry name" value="MurCD N-terminal domain"/>
    <property type="match status" value="1"/>
</dbReference>
<dbReference type="SUPFAM" id="SSF53623">
    <property type="entry name" value="MurD-like peptide ligases, catalytic domain"/>
    <property type="match status" value="1"/>
</dbReference>
<dbReference type="SUPFAM" id="SSF53244">
    <property type="entry name" value="MurD-like peptide ligases, peptide-binding domain"/>
    <property type="match status" value="1"/>
</dbReference>
<accession>A1SL79</accession>
<sequence>MRLPVPDQVLPADRLGRVHFVGIGGAGLSGIARIMLARGITVSGSDGTDSPTLTALRELGARVHLGHDAAHVHDVDTLVVSTAVREDNPEYVEAVRQGLRVLPRSAALAAVMAGRRVVAVAGTHGKTTTTSLLTVALQAAGADPTYAIGGDLAATGVNAAEGTGDLFVAEADESDGAFLHYSPYAAVVTNIEADHLDQWGTPEAYAAAFDEFADTLAPDGFLVCVADDPGAAALAERHRAAGRRVVTVSARDAGALDGVTLWSPGEHYLADALAALAAGVELGYAAADLARGLASYTGTKRRMERKGEAGGVRVYDSYAHHPTEIAGDLQAARAVAGSGRVVVAFQPHLVSRTRIFGTAMGRALGAADEVVVLDVYLAREDPDPEVTGALVAGAVPLPAERVAYVADFDAVAAELVARARPGDLVLTLGAGTVTAIGPRVLGLLDG</sequence>
<feature type="chain" id="PRO_1000004380" description="UDP-N-acetylmuramate--L-alanine ligase">
    <location>
        <begin position="1"/>
        <end position="446"/>
    </location>
</feature>
<feature type="binding site" evidence="1">
    <location>
        <begin position="122"/>
        <end position="128"/>
    </location>
    <ligand>
        <name>ATP</name>
        <dbReference type="ChEBI" id="CHEBI:30616"/>
    </ligand>
</feature>
<organism>
    <name type="scientific">Nocardioides sp. (strain ATCC BAA-499 / JS614)</name>
    <dbReference type="NCBI Taxonomy" id="196162"/>
    <lineage>
        <taxon>Bacteria</taxon>
        <taxon>Bacillati</taxon>
        <taxon>Actinomycetota</taxon>
        <taxon>Actinomycetes</taxon>
        <taxon>Propionibacteriales</taxon>
        <taxon>Nocardioidaceae</taxon>
        <taxon>Nocardioides</taxon>
    </lineage>
</organism>
<proteinExistence type="inferred from homology"/>